<accession>B0R558</accession>
<comment type="function">
    <text evidence="1">Catalyzes the transfer of the enolpyruvyl moiety of phosphoenolpyruvate (PEP) to the 5-hydroxyl of shikimate-3-phosphate (S3P) to produce enolpyruvyl shikimate-3-phosphate and inorganic phosphate.</text>
</comment>
<comment type="catalytic activity">
    <reaction evidence="1">
        <text>3-phosphoshikimate + phosphoenolpyruvate = 5-O-(1-carboxyvinyl)-3-phosphoshikimate + phosphate</text>
        <dbReference type="Rhea" id="RHEA:21256"/>
        <dbReference type="ChEBI" id="CHEBI:43474"/>
        <dbReference type="ChEBI" id="CHEBI:57701"/>
        <dbReference type="ChEBI" id="CHEBI:58702"/>
        <dbReference type="ChEBI" id="CHEBI:145989"/>
        <dbReference type="EC" id="2.5.1.19"/>
    </reaction>
    <physiologicalReaction direction="left-to-right" evidence="1">
        <dbReference type="Rhea" id="RHEA:21257"/>
    </physiologicalReaction>
</comment>
<comment type="pathway">
    <text evidence="1">Metabolic intermediate biosynthesis; chorismate biosynthesis.</text>
</comment>
<comment type="subunit">
    <text evidence="1">Monomer.</text>
</comment>
<comment type="subcellular location">
    <subcellularLocation>
        <location evidence="1">Cytoplasm</location>
    </subcellularLocation>
</comment>
<comment type="similarity">
    <text evidence="1">Belongs to the EPSP synthase family.</text>
</comment>
<proteinExistence type="inferred from homology"/>
<reference key="1">
    <citation type="journal article" date="2008" name="Genomics">
        <title>Evolution in the laboratory: the genome of Halobacterium salinarum strain R1 compared to that of strain NRC-1.</title>
        <authorList>
            <person name="Pfeiffer F."/>
            <person name="Schuster S.C."/>
            <person name="Broicher A."/>
            <person name="Falb M."/>
            <person name="Palm P."/>
            <person name="Rodewald K."/>
            <person name="Ruepp A."/>
            <person name="Soppa J."/>
            <person name="Tittor J."/>
            <person name="Oesterhelt D."/>
        </authorList>
    </citation>
    <scope>NUCLEOTIDE SEQUENCE [LARGE SCALE GENOMIC DNA]</scope>
    <source>
        <strain>ATCC 29341 / DSM 671 / R1</strain>
    </source>
</reference>
<protein>
    <recommendedName>
        <fullName evidence="1">3-phosphoshikimate 1-carboxyvinyltransferase</fullName>
        <ecNumber evidence="1">2.5.1.19</ecNumber>
    </recommendedName>
    <alternativeName>
        <fullName evidence="1">5-enolpyruvylshikimate-3-phosphate synthase</fullName>
        <shortName evidence="1">EPSP synthase</shortName>
        <shortName evidence="1">EPSPS</shortName>
    </alternativeName>
</protein>
<feature type="chain" id="PRO_1000099704" description="3-phosphoshikimate 1-carboxyvinyltransferase">
    <location>
        <begin position="1"/>
        <end position="430"/>
    </location>
</feature>
<feature type="region of interest" description="Disordered" evidence="2">
    <location>
        <begin position="1"/>
        <end position="20"/>
    </location>
</feature>
<feature type="active site" description="Proton acceptor" evidence="1">
    <location>
        <position position="312"/>
    </location>
</feature>
<feature type="binding site" evidence="1">
    <location>
        <position position="20"/>
    </location>
    <ligand>
        <name>3-phosphoshikimate</name>
        <dbReference type="ChEBI" id="CHEBI:145989"/>
    </ligand>
</feature>
<feature type="binding site" evidence="1">
    <location>
        <position position="20"/>
    </location>
    <ligand>
        <name>phosphoenolpyruvate</name>
        <dbReference type="ChEBI" id="CHEBI:58702"/>
    </ligand>
</feature>
<feature type="binding site" evidence="1">
    <location>
        <position position="21"/>
    </location>
    <ligand>
        <name>3-phosphoshikimate</name>
        <dbReference type="ChEBI" id="CHEBI:145989"/>
    </ligand>
</feature>
<feature type="binding site" evidence="1">
    <location>
        <position position="25"/>
    </location>
    <ligand>
        <name>3-phosphoshikimate</name>
        <dbReference type="ChEBI" id="CHEBI:145989"/>
    </ligand>
</feature>
<feature type="binding site" evidence="1">
    <location>
        <position position="91"/>
    </location>
    <ligand>
        <name>phosphoenolpyruvate</name>
        <dbReference type="ChEBI" id="CHEBI:58702"/>
    </ligand>
</feature>
<feature type="binding site" evidence="1">
    <location>
        <position position="119"/>
    </location>
    <ligand>
        <name>phosphoenolpyruvate</name>
        <dbReference type="ChEBI" id="CHEBI:58702"/>
    </ligand>
</feature>
<feature type="binding site" evidence="1">
    <location>
        <position position="164"/>
    </location>
    <ligand>
        <name>3-phosphoshikimate</name>
        <dbReference type="ChEBI" id="CHEBI:145989"/>
    </ligand>
</feature>
<feature type="binding site" evidence="1">
    <location>
        <position position="165"/>
    </location>
    <ligand>
        <name>3-phosphoshikimate</name>
        <dbReference type="ChEBI" id="CHEBI:145989"/>
    </ligand>
</feature>
<feature type="binding site" evidence="1">
    <location>
        <position position="166"/>
    </location>
    <ligand>
        <name>3-phosphoshikimate</name>
        <dbReference type="ChEBI" id="CHEBI:145989"/>
    </ligand>
</feature>
<feature type="binding site" evidence="1">
    <location>
        <position position="166"/>
    </location>
    <ligand>
        <name>phosphoenolpyruvate</name>
        <dbReference type="ChEBI" id="CHEBI:58702"/>
    </ligand>
</feature>
<feature type="binding site" evidence="1">
    <location>
        <position position="192"/>
    </location>
    <ligand>
        <name>3-phosphoshikimate</name>
        <dbReference type="ChEBI" id="CHEBI:145989"/>
    </ligand>
</feature>
<feature type="binding site" evidence="1">
    <location>
        <position position="312"/>
    </location>
    <ligand>
        <name>3-phosphoshikimate</name>
        <dbReference type="ChEBI" id="CHEBI:145989"/>
    </ligand>
</feature>
<feature type="binding site" evidence="1">
    <location>
        <position position="339"/>
    </location>
    <ligand>
        <name>3-phosphoshikimate</name>
        <dbReference type="ChEBI" id="CHEBI:145989"/>
    </ligand>
</feature>
<feature type="binding site" evidence="1">
    <location>
        <position position="343"/>
    </location>
    <ligand>
        <name>phosphoenolpyruvate</name>
        <dbReference type="ChEBI" id="CHEBI:58702"/>
    </ligand>
</feature>
<feature type="binding site" evidence="1">
    <location>
        <position position="386"/>
    </location>
    <ligand>
        <name>phosphoenolpyruvate</name>
        <dbReference type="ChEBI" id="CHEBI:58702"/>
    </ligand>
</feature>
<evidence type="ECO:0000255" key="1">
    <source>
        <dbReference type="HAMAP-Rule" id="MF_00210"/>
    </source>
</evidence>
<evidence type="ECO:0000256" key="2">
    <source>
        <dbReference type="SAM" id="MobiDB-lite"/>
    </source>
</evidence>
<sequence>MHATVSPSRVRGRARAPPSKSYTHRALLAAGYADGETVVRDPLVSADTRATARAVELLGGAAARENGDWVVTGFGSRPAIPDAVIDCANSGTTMRLVTAAAALADGTTVLTGDESLRARPHGPLLDALSGLGGTARSTRGNGQAPLVVDGPVSGGSVALPGDVSSQFVTALLMAGAVTETGIETDLTTELKSAPYVDITLDVLDAFGVGASETAAGYRVRGGQAYAPSGAEYAVPGDFSSASYLLAAGALAAADGAAVVVEGMHPSAQGDAAIVDVLERMGADIDWDTESGVITVQRSELSGVEVGVADTPDLLPTIAVLGAAADGTTRITDAEHVRYKETDRVAAMAESLSKLGASVEERPDELVVRGGDTELSGASVDGRGDHRLVMALAVAGLVADGETTIAGSEHVDVSFPDFFEVLAGLGADTDG</sequence>
<gene>
    <name evidence="1" type="primary">aroA</name>
    <name type="ordered locus">OE_2762R</name>
</gene>
<dbReference type="EC" id="2.5.1.19" evidence="1"/>
<dbReference type="EMBL" id="AM774415">
    <property type="protein sequence ID" value="CAP13874.1"/>
    <property type="molecule type" value="Genomic_DNA"/>
</dbReference>
<dbReference type="RefSeq" id="WP_012289296.1">
    <property type="nucleotide sequence ID" value="NC_010364.1"/>
</dbReference>
<dbReference type="SMR" id="B0R558"/>
<dbReference type="EnsemblBacteria" id="CAP13874">
    <property type="protein sequence ID" value="CAP13874"/>
    <property type="gene ID" value="OE_2762R"/>
</dbReference>
<dbReference type="GeneID" id="68693995"/>
<dbReference type="KEGG" id="hsl:OE_2762R"/>
<dbReference type="HOGENOM" id="CLU_024321_0_0_2"/>
<dbReference type="PhylomeDB" id="B0R558"/>
<dbReference type="UniPathway" id="UPA00053"/>
<dbReference type="Proteomes" id="UP000001321">
    <property type="component" value="Chromosome"/>
</dbReference>
<dbReference type="GO" id="GO:0005737">
    <property type="term" value="C:cytoplasm"/>
    <property type="evidence" value="ECO:0007669"/>
    <property type="project" value="UniProtKB-SubCell"/>
</dbReference>
<dbReference type="GO" id="GO:0003866">
    <property type="term" value="F:3-phosphoshikimate 1-carboxyvinyltransferase activity"/>
    <property type="evidence" value="ECO:0007669"/>
    <property type="project" value="UniProtKB-UniRule"/>
</dbReference>
<dbReference type="GO" id="GO:0008652">
    <property type="term" value="P:amino acid biosynthetic process"/>
    <property type="evidence" value="ECO:0007669"/>
    <property type="project" value="UniProtKB-KW"/>
</dbReference>
<dbReference type="GO" id="GO:0009073">
    <property type="term" value="P:aromatic amino acid family biosynthetic process"/>
    <property type="evidence" value="ECO:0007669"/>
    <property type="project" value="UniProtKB-KW"/>
</dbReference>
<dbReference type="GO" id="GO:0009423">
    <property type="term" value="P:chorismate biosynthetic process"/>
    <property type="evidence" value="ECO:0007669"/>
    <property type="project" value="UniProtKB-UniRule"/>
</dbReference>
<dbReference type="CDD" id="cd01556">
    <property type="entry name" value="EPSP_synthase"/>
    <property type="match status" value="1"/>
</dbReference>
<dbReference type="FunFam" id="3.65.10.10:FF:000021">
    <property type="entry name" value="3-phosphoshikimate 1-carboxyvinyltransferase"/>
    <property type="match status" value="1"/>
</dbReference>
<dbReference type="FunFam" id="3.65.10.10:FF:000012">
    <property type="entry name" value="Pentafunctional AROM polypeptide"/>
    <property type="match status" value="1"/>
</dbReference>
<dbReference type="Gene3D" id="3.65.10.10">
    <property type="entry name" value="Enolpyruvate transferase domain"/>
    <property type="match status" value="2"/>
</dbReference>
<dbReference type="HAMAP" id="MF_00210">
    <property type="entry name" value="EPSP_synth"/>
    <property type="match status" value="1"/>
</dbReference>
<dbReference type="InterPro" id="IPR001986">
    <property type="entry name" value="Enolpyruvate_Tfrase_dom"/>
</dbReference>
<dbReference type="InterPro" id="IPR036968">
    <property type="entry name" value="Enolpyruvate_Tfrase_sf"/>
</dbReference>
<dbReference type="InterPro" id="IPR006264">
    <property type="entry name" value="EPSP_synthase"/>
</dbReference>
<dbReference type="InterPro" id="IPR023193">
    <property type="entry name" value="EPSP_synthase_CS"/>
</dbReference>
<dbReference type="InterPro" id="IPR013792">
    <property type="entry name" value="RNA3'P_cycl/enolpyr_Trfase_a/b"/>
</dbReference>
<dbReference type="NCBIfam" id="TIGR01356">
    <property type="entry name" value="aroA"/>
    <property type="match status" value="1"/>
</dbReference>
<dbReference type="PANTHER" id="PTHR21090">
    <property type="entry name" value="AROM/DEHYDROQUINATE SYNTHASE"/>
    <property type="match status" value="1"/>
</dbReference>
<dbReference type="PANTHER" id="PTHR21090:SF5">
    <property type="entry name" value="PENTAFUNCTIONAL AROM POLYPEPTIDE"/>
    <property type="match status" value="1"/>
</dbReference>
<dbReference type="Pfam" id="PF00275">
    <property type="entry name" value="EPSP_synthase"/>
    <property type="match status" value="1"/>
</dbReference>
<dbReference type="PIRSF" id="PIRSF000505">
    <property type="entry name" value="EPSPS"/>
    <property type="match status" value="1"/>
</dbReference>
<dbReference type="SUPFAM" id="SSF55205">
    <property type="entry name" value="EPT/RTPC-like"/>
    <property type="match status" value="1"/>
</dbReference>
<dbReference type="PROSITE" id="PS00104">
    <property type="entry name" value="EPSP_SYNTHASE_1"/>
    <property type="match status" value="1"/>
</dbReference>
<dbReference type="PROSITE" id="PS00885">
    <property type="entry name" value="EPSP_SYNTHASE_2"/>
    <property type="match status" value="1"/>
</dbReference>
<organism>
    <name type="scientific">Halobacterium salinarum (strain ATCC 29341 / DSM 671 / R1)</name>
    <dbReference type="NCBI Taxonomy" id="478009"/>
    <lineage>
        <taxon>Archaea</taxon>
        <taxon>Methanobacteriati</taxon>
        <taxon>Methanobacteriota</taxon>
        <taxon>Stenosarchaea group</taxon>
        <taxon>Halobacteria</taxon>
        <taxon>Halobacteriales</taxon>
        <taxon>Halobacteriaceae</taxon>
        <taxon>Halobacterium</taxon>
        <taxon>Halobacterium salinarum NRC-34001</taxon>
    </lineage>
</organism>
<keyword id="KW-0028">Amino-acid biosynthesis</keyword>
<keyword id="KW-0057">Aromatic amino acid biosynthesis</keyword>
<keyword id="KW-0963">Cytoplasm</keyword>
<keyword id="KW-0808">Transferase</keyword>
<name>AROA_HALS3</name>